<keyword id="KW-0963">Cytoplasm</keyword>
<keyword id="KW-0227">DNA damage</keyword>
<keyword id="KW-0233">DNA recombination</keyword>
<keyword id="KW-0234">DNA repair</keyword>
<keyword id="KW-0238">DNA-binding</keyword>
<name>RUVA_PSYCK</name>
<accession>Q1QCY6</accession>
<proteinExistence type="inferred from homology"/>
<reference key="1">
    <citation type="submission" date="2006-03" db="EMBL/GenBank/DDBJ databases">
        <title>Complete sequence of chromosome of Psychrobacter cryohalolentis K5.</title>
        <authorList>
            <consortium name="US DOE Joint Genome Institute"/>
            <person name="Copeland A."/>
            <person name="Lucas S."/>
            <person name="Lapidus A."/>
            <person name="Barry K."/>
            <person name="Detter J.C."/>
            <person name="Glavina T."/>
            <person name="Hammon N."/>
            <person name="Israni S."/>
            <person name="Dalin E."/>
            <person name="Tice H."/>
            <person name="Pitluck S."/>
            <person name="Brettin T."/>
            <person name="Bruce D."/>
            <person name="Han C."/>
            <person name="Tapia R."/>
            <person name="Sims D.R."/>
            <person name="Gilna P."/>
            <person name="Schmutz J."/>
            <person name="Larimer F."/>
            <person name="Land M."/>
            <person name="Hauser L."/>
            <person name="Kyrpides N."/>
            <person name="Kim E."/>
            <person name="Richardson P."/>
        </authorList>
    </citation>
    <scope>NUCLEOTIDE SEQUENCE [LARGE SCALE GENOMIC DNA]</scope>
    <source>
        <strain>ATCC BAA-1226 / DSM 17306 / VKM B-2378 / K5</strain>
    </source>
</reference>
<sequence>MIGLINGQVQYLMAPTACVMTTSGVGYDIELPLPSFCQLRLNEQASIWTHFHVREDAQLLYGFIDRKERDVFRQLIKINGVGAKMALAMLSAMSAAELKMHVEQDSEDALTRIPGIGKKTAQRLLIELKDKLKNIEVDSSHLEFAMQPAPISAEGSIIAEVEGALISLGYKEREAQQAIKAAKSNGETFADTQSLLKATLQQFQSFK</sequence>
<dbReference type="EMBL" id="CP000323">
    <property type="protein sequence ID" value="ABE74467.1"/>
    <property type="molecule type" value="Genomic_DNA"/>
</dbReference>
<dbReference type="RefSeq" id="WP_011513034.1">
    <property type="nucleotide sequence ID" value="NC_007969.1"/>
</dbReference>
<dbReference type="SMR" id="Q1QCY6"/>
<dbReference type="STRING" id="335284.Pcryo_0684"/>
<dbReference type="KEGG" id="pcr:Pcryo_0684"/>
<dbReference type="eggNOG" id="COG0632">
    <property type="taxonomic scope" value="Bacteria"/>
</dbReference>
<dbReference type="HOGENOM" id="CLU_087936_0_0_6"/>
<dbReference type="Proteomes" id="UP000002425">
    <property type="component" value="Chromosome"/>
</dbReference>
<dbReference type="GO" id="GO:0005737">
    <property type="term" value="C:cytoplasm"/>
    <property type="evidence" value="ECO:0007669"/>
    <property type="project" value="UniProtKB-SubCell"/>
</dbReference>
<dbReference type="GO" id="GO:0009379">
    <property type="term" value="C:Holliday junction helicase complex"/>
    <property type="evidence" value="ECO:0007669"/>
    <property type="project" value="InterPro"/>
</dbReference>
<dbReference type="GO" id="GO:0048476">
    <property type="term" value="C:Holliday junction resolvase complex"/>
    <property type="evidence" value="ECO:0007669"/>
    <property type="project" value="UniProtKB-UniRule"/>
</dbReference>
<dbReference type="GO" id="GO:0005524">
    <property type="term" value="F:ATP binding"/>
    <property type="evidence" value="ECO:0007669"/>
    <property type="project" value="InterPro"/>
</dbReference>
<dbReference type="GO" id="GO:0000400">
    <property type="term" value="F:four-way junction DNA binding"/>
    <property type="evidence" value="ECO:0007669"/>
    <property type="project" value="UniProtKB-UniRule"/>
</dbReference>
<dbReference type="GO" id="GO:0009378">
    <property type="term" value="F:four-way junction helicase activity"/>
    <property type="evidence" value="ECO:0007669"/>
    <property type="project" value="InterPro"/>
</dbReference>
<dbReference type="GO" id="GO:0006310">
    <property type="term" value="P:DNA recombination"/>
    <property type="evidence" value="ECO:0007669"/>
    <property type="project" value="UniProtKB-UniRule"/>
</dbReference>
<dbReference type="GO" id="GO:0006281">
    <property type="term" value="P:DNA repair"/>
    <property type="evidence" value="ECO:0007669"/>
    <property type="project" value="UniProtKB-UniRule"/>
</dbReference>
<dbReference type="CDD" id="cd14332">
    <property type="entry name" value="UBA_RuvA_C"/>
    <property type="match status" value="1"/>
</dbReference>
<dbReference type="Gene3D" id="1.10.150.20">
    <property type="entry name" value="5' to 3' exonuclease, C-terminal subdomain"/>
    <property type="match status" value="1"/>
</dbReference>
<dbReference type="Gene3D" id="1.10.8.10">
    <property type="entry name" value="DNA helicase RuvA subunit, C-terminal domain"/>
    <property type="match status" value="1"/>
</dbReference>
<dbReference type="Gene3D" id="2.40.50.140">
    <property type="entry name" value="Nucleic acid-binding proteins"/>
    <property type="match status" value="1"/>
</dbReference>
<dbReference type="HAMAP" id="MF_00031">
    <property type="entry name" value="DNA_HJ_migration_RuvA"/>
    <property type="match status" value="1"/>
</dbReference>
<dbReference type="InterPro" id="IPR013849">
    <property type="entry name" value="DNA_helicase_Holl-junc_RuvA_I"/>
</dbReference>
<dbReference type="InterPro" id="IPR003583">
    <property type="entry name" value="Hlx-hairpin-Hlx_DNA-bd_motif"/>
</dbReference>
<dbReference type="InterPro" id="IPR012340">
    <property type="entry name" value="NA-bd_OB-fold"/>
</dbReference>
<dbReference type="InterPro" id="IPR000085">
    <property type="entry name" value="RuvA"/>
</dbReference>
<dbReference type="InterPro" id="IPR010994">
    <property type="entry name" value="RuvA_2-like"/>
</dbReference>
<dbReference type="InterPro" id="IPR011114">
    <property type="entry name" value="RuvA_C"/>
</dbReference>
<dbReference type="InterPro" id="IPR036267">
    <property type="entry name" value="RuvA_C_sf"/>
</dbReference>
<dbReference type="NCBIfam" id="TIGR00084">
    <property type="entry name" value="ruvA"/>
    <property type="match status" value="1"/>
</dbReference>
<dbReference type="Pfam" id="PF14520">
    <property type="entry name" value="HHH_5"/>
    <property type="match status" value="1"/>
</dbReference>
<dbReference type="Pfam" id="PF07499">
    <property type="entry name" value="RuvA_C"/>
    <property type="match status" value="1"/>
</dbReference>
<dbReference type="Pfam" id="PF01330">
    <property type="entry name" value="RuvA_N"/>
    <property type="match status" value="1"/>
</dbReference>
<dbReference type="SMART" id="SM00278">
    <property type="entry name" value="HhH1"/>
    <property type="match status" value="2"/>
</dbReference>
<dbReference type="SUPFAM" id="SSF46929">
    <property type="entry name" value="DNA helicase RuvA subunit, C-terminal domain"/>
    <property type="match status" value="1"/>
</dbReference>
<dbReference type="SUPFAM" id="SSF50249">
    <property type="entry name" value="Nucleic acid-binding proteins"/>
    <property type="match status" value="1"/>
</dbReference>
<dbReference type="SUPFAM" id="SSF47781">
    <property type="entry name" value="RuvA domain 2-like"/>
    <property type="match status" value="1"/>
</dbReference>
<comment type="function">
    <text evidence="1">The RuvA-RuvB-RuvC complex processes Holliday junction (HJ) DNA during genetic recombination and DNA repair, while the RuvA-RuvB complex plays an important role in the rescue of blocked DNA replication forks via replication fork reversal (RFR). RuvA specifically binds to HJ cruciform DNA, conferring on it an open structure. The RuvB hexamer acts as an ATP-dependent pump, pulling dsDNA into and through the RuvAB complex. HJ branch migration allows RuvC to scan DNA until it finds its consensus sequence, where it cleaves and resolves the cruciform DNA.</text>
</comment>
<comment type="subunit">
    <text evidence="1">Homotetramer. Forms an RuvA(8)-RuvB(12)-Holliday junction (HJ) complex. HJ DNA is sandwiched between 2 RuvA tetramers; dsDNA enters through RuvA and exits via RuvB. An RuvB hexamer assembles on each DNA strand where it exits the tetramer. Each RuvB hexamer is contacted by two RuvA subunits (via domain III) on 2 adjacent RuvB subunits; this complex drives branch migration. In the full resolvosome a probable DNA-RuvA(4)-RuvB(12)-RuvC(2) complex forms which resolves the HJ.</text>
</comment>
<comment type="subcellular location">
    <subcellularLocation>
        <location evidence="1">Cytoplasm</location>
    </subcellularLocation>
</comment>
<comment type="domain">
    <text evidence="1">Has three domains with a flexible linker between the domains II and III and assumes an 'L' shape. Domain III is highly mobile and contacts RuvB.</text>
</comment>
<comment type="similarity">
    <text evidence="1">Belongs to the RuvA family.</text>
</comment>
<organism>
    <name type="scientific">Psychrobacter cryohalolentis (strain ATCC BAA-1226 / DSM 17306 / VKM B-2378 / K5)</name>
    <dbReference type="NCBI Taxonomy" id="335284"/>
    <lineage>
        <taxon>Bacteria</taxon>
        <taxon>Pseudomonadati</taxon>
        <taxon>Pseudomonadota</taxon>
        <taxon>Gammaproteobacteria</taxon>
        <taxon>Moraxellales</taxon>
        <taxon>Moraxellaceae</taxon>
        <taxon>Psychrobacter</taxon>
    </lineage>
</organism>
<feature type="chain" id="PRO_1000002521" description="Holliday junction branch migration complex subunit RuvA">
    <location>
        <begin position="1"/>
        <end position="207"/>
    </location>
</feature>
<feature type="region of interest" description="Domain I" evidence="1">
    <location>
        <begin position="1"/>
        <end position="64"/>
    </location>
</feature>
<feature type="region of interest" description="Domain II" evidence="1">
    <location>
        <begin position="65"/>
        <end position="143"/>
    </location>
</feature>
<feature type="region of interest" description="Flexible linker" evidence="1">
    <location>
        <begin position="144"/>
        <end position="152"/>
    </location>
</feature>
<feature type="region of interest" description="Domain III" evidence="1">
    <location>
        <begin position="153"/>
        <end position="207"/>
    </location>
</feature>
<protein>
    <recommendedName>
        <fullName evidence="1">Holliday junction branch migration complex subunit RuvA</fullName>
    </recommendedName>
</protein>
<evidence type="ECO:0000255" key="1">
    <source>
        <dbReference type="HAMAP-Rule" id="MF_00031"/>
    </source>
</evidence>
<gene>
    <name evidence="1" type="primary">ruvA</name>
    <name type="ordered locus">Pcryo_0684</name>
</gene>